<geneLocation type="chloroplast"/>
<protein>
    <recommendedName>
        <fullName>NAD(P)H-quinone oxidoreductase subunit 5, chloroplastic</fullName>
        <ecNumber>7.1.1.-</ecNumber>
    </recommendedName>
    <alternativeName>
        <fullName>NAD(P)H dehydrogenase subunit 5</fullName>
    </alternativeName>
    <alternativeName>
        <fullName>NADH-plastoquinone oxidoreductase subunit 5</fullName>
    </alternativeName>
</protein>
<proteinExistence type="inferred from homology"/>
<gene>
    <name type="primary">ndhF</name>
</gene>
<name>NU5C_ILLOL</name>
<feature type="chain" id="PRO_0000360940" description="NAD(P)H-quinone oxidoreductase subunit 5, chloroplastic">
    <location>
        <begin position="1"/>
        <end position="749"/>
    </location>
</feature>
<feature type="transmembrane region" description="Helical" evidence="2">
    <location>
        <begin position="9"/>
        <end position="29"/>
    </location>
</feature>
<feature type="transmembrane region" description="Helical" evidence="2">
    <location>
        <begin position="40"/>
        <end position="60"/>
    </location>
</feature>
<feature type="transmembrane region" description="Helical" evidence="2">
    <location>
        <begin position="89"/>
        <end position="109"/>
    </location>
</feature>
<feature type="transmembrane region" description="Helical" evidence="2">
    <location>
        <begin position="147"/>
        <end position="167"/>
    </location>
</feature>
<feature type="transmembrane region" description="Helical" evidence="2">
    <location>
        <begin position="185"/>
        <end position="205"/>
    </location>
</feature>
<feature type="transmembrane region" description="Helical" evidence="2">
    <location>
        <begin position="219"/>
        <end position="239"/>
    </location>
</feature>
<feature type="transmembrane region" description="Helical" evidence="2">
    <location>
        <begin position="258"/>
        <end position="278"/>
    </location>
</feature>
<feature type="transmembrane region" description="Helical" evidence="2">
    <location>
        <begin position="280"/>
        <end position="300"/>
    </location>
</feature>
<feature type="transmembrane region" description="Helical" evidence="2">
    <location>
        <begin position="327"/>
        <end position="347"/>
    </location>
</feature>
<feature type="transmembrane region" description="Helical" evidence="2">
    <location>
        <begin position="354"/>
        <end position="374"/>
    </location>
</feature>
<feature type="transmembrane region" description="Helical" evidence="2">
    <location>
        <begin position="396"/>
        <end position="416"/>
    </location>
</feature>
<feature type="transmembrane region" description="Helical" evidence="2">
    <location>
        <begin position="425"/>
        <end position="445"/>
    </location>
</feature>
<feature type="transmembrane region" description="Helical" evidence="2">
    <location>
        <begin position="544"/>
        <end position="564"/>
    </location>
</feature>
<feature type="transmembrane region" description="Helical" evidence="2">
    <location>
        <begin position="605"/>
        <end position="625"/>
    </location>
</feature>
<feature type="transmembrane region" description="Helical" evidence="2">
    <location>
        <begin position="694"/>
        <end position="714"/>
    </location>
</feature>
<feature type="transmembrane region" description="Helical" evidence="2">
    <location>
        <begin position="722"/>
        <end position="742"/>
    </location>
</feature>
<sequence>MERTYDYAWIIPFIPLTVPMSIGLGLLLVPTATKSILRMWAFFSVSLLSIVMVFSADLSIQQINCSFIYQYLWSWTINSDFSLELGCLIDPLTSIMLILITTVGIMVLIYSDNYMSHDQGYLRFFASMSFSNTSMLGLVTSSNLIQIYIFWELVGMCSYLLIGFWFTRPIAANACQKAFVTNRVGDFGLLLGILGLYWITGSFEFRDLFKIFNNLIHNNGVNSLFVTFFASLLFLGAVAKSAQFPLHIWLPDAMEGPTPISALIHAATMVVAGIFLVARLLPLFTVIPYIMNLISLIGVITLLLGATFALAQRDIKKSLAYSTMSQLGYIMLAPGIGSYRAASFHLITHAYSKALLFLGSGSIIHSMEPIVGYSPDKSQNMILMGGLTKYLPITKITFLLGTLSLCGIPPLACFWSKDEILNDSWLYSPIFAIIACFTTGLTAFYMFRMYLLTFEEHLRVHFQKYSGATNSSFYSISIWGKEASQLLNSGLLLSTMNNNEKVSFFLNKTYEIDENVRKMMRSFSTSTHFVKKKTPMYPHESDNTMLLPLLVLVIFTLFVGFIGVRFDQGVMDLDILSKWLTPSINFLHRNLNDPWDWYEFATNAIFSVSIACFGIWIASLLYGSVYSSFQNLDLMNSFVKIDSKRILLEPIINVIYNWSYNRGYIDVYYATVFTRGIRGLAKLTHSFDRRVIDGITNGFGIASFFVGEGVKYVGGGRISSYLFLYLSYVSIFLVISYFCFGICNSILFF</sequence>
<organism>
    <name type="scientific">Illicium oligandrum</name>
    <name type="common">Star anise</name>
    <dbReference type="NCBI Taxonomy" id="145286"/>
    <lineage>
        <taxon>Eukaryota</taxon>
        <taxon>Viridiplantae</taxon>
        <taxon>Streptophyta</taxon>
        <taxon>Embryophyta</taxon>
        <taxon>Tracheophyta</taxon>
        <taxon>Spermatophyta</taxon>
        <taxon>Magnoliopsida</taxon>
        <taxon>Austrobaileyales</taxon>
        <taxon>Schisandraceae</taxon>
        <taxon>Illicium</taxon>
    </lineage>
</organism>
<evidence type="ECO:0000250" key="1"/>
<evidence type="ECO:0000255" key="2"/>
<evidence type="ECO:0000305" key="3"/>
<dbReference type="EC" id="7.1.1.-"/>
<dbReference type="EMBL" id="EF380354">
    <property type="protein sequence ID" value="ABQ52567.1"/>
    <property type="molecule type" value="Genomic_DNA"/>
</dbReference>
<dbReference type="RefSeq" id="YP_001294318.1">
    <property type="nucleotide sequence ID" value="NC_009600.1"/>
</dbReference>
<dbReference type="SMR" id="A6MMZ2"/>
<dbReference type="GeneID" id="5236719"/>
<dbReference type="GO" id="GO:0009535">
    <property type="term" value="C:chloroplast thylakoid membrane"/>
    <property type="evidence" value="ECO:0007669"/>
    <property type="project" value="UniProtKB-SubCell"/>
</dbReference>
<dbReference type="GO" id="GO:0008137">
    <property type="term" value="F:NADH dehydrogenase (ubiquinone) activity"/>
    <property type="evidence" value="ECO:0007669"/>
    <property type="project" value="InterPro"/>
</dbReference>
<dbReference type="GO" id="GO:0048038">
    <property type="term" value="F:quinone binding"/>
    <property type="evidence" value="ECO:0007669"/>
    <property type="project" value="UniProtKB-KW"/>
</dbReference>
<dbReference type="GO" id="GO:0042773">
    <property type="term" value="P:ATP synthesis coupled electron transport"/>
    <property type="evidence" value="ECO:0007669"/>
    <property type="project" value="InterPro"/>
</dbReference>
<dbReference type="GO" id="GO:0015990">
    <property type="term" value="P:electron transport coupled proton transport"/>
    <property type="evidence" value="ECO:0007669"/>
    <property type="project" value="TreeGrafter"/>
</dbReference>
<dbReference type="Gene3D" id="1.20.5.2700">
    <property type="match status" value="1"/>
</dbReference>
<dbReference type="InterPro" id="IPR002128">
    <property type="entry name" value="NADH_UbQ_OxRdtase_chlpt_su5_C"/>
</dbReference>
<dbReference type="InterPro" id="IPR018393">
    <property type="entry name" value="NADHpl_OxRdtase_5_subgr"/>
</dbReference>
<dbReference type="InterPro" id="IPR001750">
    <property type="entry name" value="ND/Mrp_TM"/>
</dbReference>
<dbReference type="InterPro" id="IPR003945">
    <property type="entry name" value="NU5C-like"/>
</dbReference>
<dbReference type="InterPro" id="IPR001516">
    <property type="entry name" value="Proton_antipo_N"/>
</dbReference>
<dbReference type="NCBIfam" id="TIGR01974">
    <property type="entry name" value="NDH_I_L"/>
    <property type="match status" value="1"/>
</dbReference>
<dbReference type="NCBIfam" id="NF005141">
    <property type="entry name" value="PRK06590.1"/>
    <property type="match status" value="1"/>
</dbReference>
<dbReference type="PANTHER" id="PTHR42829">
    <property type="entry name" value="NADH-UBIQUINONE OXIDOREDUCTASE CHAIN 5"/>
    <property type="match status" value="1"/>
</dbReference>
<dbReference type="PANTHER" id="PTHR42829:SF2">
    <property type="entry name" value="NADH-UBIQUINONE OXIDOREDUCTASE CHAIN 5"/>
    <property type="match status" value="1"/>
</dbReference>
<dbReference type="Pfam" id="PF01010">
    <property type="entry name" value="Proton_antipo_C"/>
    <property type="match status" value="1"/>
</dbReference>
<dbReference type="Pfam" id="PF00361">
    <property type="entry name" value="Proton_antipo_M"/>
    <property type="match status" value="1"/>
</dbReference>
<dbReference type="Pfam" id="PF00662">
    <property type="entry name" value="Proton_antipo_N"/>
    <property type="match status" value="1"/>
</dbReference>
<dbReference type="PRINTS" id="PR01434">
    <property type="entry name" value="NADHDHGNASE5"/>
</dbReference>
<dbReference type="PRINTS" id="PR01435">
    <property type="entry name" value="NPOXDRDTASE5"/>
</dbReference>
<reference key="1">
    <citation type="journal article" date="2007" name="Mol. Phylogenet. Evol.">
        <title>Phylogenetic and evolutionary implications of complete chloroplast genome sequences of four early-diverging angiosperms: Buxus (Buxaceae), Chloranthus (Chloranthaceae), Dioscorea (Dioscoreaceae), and Illicium (Schisandraceae).</title>
        <authorList>
            <person name="Hansen D.R."/>
            <person name="Dastidar S.G."/>
            <person name="Cai Z."/>
            <person name="Penaflor C."/>
            <person name="Kuehl J.V."/>
            <person name="Boore J.L."/>
            <person name="Jansen R.K."/>
        </authorList>
    </citation>
    <scope>NUCLEOTIDE SEQUENCE [LARGE SCALE GENOMIC DNA]</scope>
</reference>
<accession>A6MMZ2</accession>
<keyword id="KW-0150">Chloroplast</keyword>
<keyword id="KW-0472">Membrane</keyword>
<keyword id="KW-0520">NAD</keyword>
<keyword id="KW-0521">NADP</keyword>
<keyword id="KW-0934">Plastid</keyword>
<keyword id="KW-0618">Plastoquinone</keyword>
<keyword id="KW-0874">Quinone</keyword>
<keyword id="KW-0793">Thylakoid</keyword>
<keyword id="KW-1278">Translocase</keyword>
<keyword id="KW-0812">Transmembrane</keyword>
<keyword id="KW-1133">Transmembrane helix</keyword>
<keyword id="KW-0813">Transport</keyword>
<comment type="function">
    <text evidence="1">NDH shuttles electrons from NAD(P)H:plastoquinone, via FMN and iron-sulfur (Fe-S) centers, to quinones in the photosynthetic chain and possibly in a chloroplast respiratory chain. The immediate electron acceptor for the enzyme in this species is believed to be plastoquinone. Couples the redox reaction to proton translocation, and thus conserves the redox energy in a proton gradient (By similarity).</text>
</comment>
<comment type="catalytic activity">
    <reaction>
        <text>a plastoquinone + NADH + (n+1) H(+)(in) = a plastoquinol + NAD(+) + n H(+)(out)</text>
        <dbReference type="Rhea" id="RHEA:42608"/>
        <dbReference type="Rhea" id="RHEA-COMP:9561"/>
        <dbReference type="Rhea" id="RHEA-COMP:9562"/>
        <dbReference type="ChEBI" id="CHEBI:15378"/>
        <dbReference type="ChEBI" id="CHEBI:17757"/>
        <dbReference type="ChEBI" id="CHEBI:57540"/>
        <dbReference type="ChEBI" id="CHEBI:57945"/>
        <dbReference type="ChEBI" id="CHEBI:62192"/>
    </reaction>
</comment>
<comment type="catalytic activity">
    <reaction>
        <text>a plastoquinone + NADPH + (n+1) H(+)(in) = a plastoquinol + NADP(+) + n H(+)(out)</text>
        <dbReference type="Rhea" id="RHEA:42612"/>
        <dbReference type="Rhea" id="RHEA-COMP:9561"/>
        <dbReference type="Rhea" id="RHEA-COMP:9562"/>
        <dbReference type="ChEBI" id="CHEBI:15378"/>
        <dbReference type="ChEBI" id="CHEBI:17757"/>
        <dbReference type="ChEBI" id="CHEBI:57783"/>
        <dbReference type="ChEBI" id="CHEBI:58349"/>
        <dbReference type="ChEBI" id="CHEBI:62192"/>
    </reaction>
</comment>
<comment type="subunit">
    <text evidence="1">NDH is composed of at least 16 different subunits, 5 of which are encoded in the nucleus.</text>
</comment>
<comment type="subcellular location">
    <subcellularLocation>
        <location evidence="1">Plastid</location>
        <location evidence="1">Chloroplast thylakoid membrane</location>
        <topology evidence="1">Multi-pass membrane protein</topology>
    </subcellularLocation>
</comment>
<comment type="similarity">
    <text evidence="3">Belongs to the complex I subunit 5 family.</text>
</comment>